<gene>
    <name evidence="1" type="primary">fhs1</name>
    <name type="ordered locus">Pden_1317</name>
</gene>
<gene>
    <name evidence="1" type="primary">fhs2</name>
    <name type="ordered locus">Pden_1580</name>
</gene>
<reference key="1">
    <citation type="submission" date="2006-12" db="EMBL/GenBank/DDBJ databases">
        <title>Complete sequence of chromosome 1 of Paracoccus denitrificans PD1222.</title>
        <authorList>
            <person name="Copeland A."/>
            <person name="Lucas S."/>
            <person name="Lapidus A."/>
            <person name="Barry K."/>
            <person name="Detter J.C."/>
            <person name="Glavina del Rio T."/>
            <person name="Hammon N."/>
            <person name="Israni S."/>
            <person name="Dalin E."/>
            <person name="Tice H."/>
            <person name="Pitluck S."/>
            <person name="Munk A.C."/>
            <person name="Brettin T."/>
            <person name="Bruce D."/>
            <person name="Han C."/>
            <person name="Tapia R."/>
            <person name="Gilna P."/>
            <person name="Schmutz J."/>
            <person name="Larimer F."/>
            <person name="Land M."/>
            <person name="Hauser L."/>
            <person name="Kyrpides N."/>
            <person name="Lykidis A."/>
            <person name="Spiro S."/>
            <person name="Richardson D.J."/>
            <person name="Moir J.W.B."/>
            <person name="Ferguson S.J."/>
            <person name="van Spanning R.J.M."/>
            <person name="Richardson P."/>
        </authorList>
    </citation>
    <scope>NUCLEOTIDE SEQUENCE [LARGE SCALE GENOMIC DNA]</scope>
    <source>
        <strain>Pd 1222</strain>
    </source>
</reference>
<keyword id="KW-0067">ATP-binding</keyword>
<keyword id="KW-0436">Ligase</keyword>
<keyword id="KW-0547">Nucleotide-binding</keyword>
<keyword id="KW-0554">One-carbon metabolism</keyword>
<keyword id="KW-1185">Reference proteome</keyword>
<accession>A1B1M8</accession>
<name>FTHS_PARDP</name>
<comment type="catalytic activity">
    <reaction evidence="1">
        <text>(6S)-5,6,7,8-tetrahydrofolate + formate + ATP = (6R)-10-formyltetrahydrofolate + ADP + phosphate</text>
        <dbReference type="Rhea" id="RHEA:20221"/>
        <dbReference type="ChEBI" id="CHEBI:15740"/>
        <dbReference type="ChEBI" id="CHEBI:30616"/>
        <dbReference type="ChEBI" id="CHEBI:43474"/>
        <dbReference type="ChEBI" id="CHEBI:57453"/>
        <dbReference type="ChEBI" id="CHEBI:195366"/>
        <dbReference type="ChEBI" id="CHEBI:456216"/>
        <dbReference type="EC" id="6.3.4.3"/>
    </reaction>
</comment>
<comment type="pathway">
    <text evidence="1">One-carbon metabolism; tetrahydrofolate interconversion.</text>
</comment>
<comment type="similarity">
    <text evidence="1">Belongs to the formate--tetrahydrofolate ligase family.</text>
</comment>
<dbReference type="EC" id="6.3.4.3" evidence="1"/>
<dbReference type="EMBL" id="CP000489">
    <property type="protein sequence ID" value="ABL69422.1"/>
    <property type="molecule type" value="Genomic_DNA"/>
</dbReference>
<dbReference type="EMBL" id="CP000489">
    <property type="protein sequence ID" value="ABL69680.1"/>
    <property type="molecule type" value="Genomic_DNA"/>
</dbReference>
<dbReference type="RefSeq" id="WP_011747640.1">
    <property type="nucleotide sequence ID" value="NC_008686.1"/>
</dbReference>
<dbReference type="SMR" id="A1B1M8"/>
<dbReference type="STRING" id="318586.Pden_1317"/>
<dbReference type="EnsemblBacteria" id="ABL69422">
    <property type="protein sequence ID" value="ABL69422"/>
    <property type="gene ID" value="Pden_1317"/>
</dbReference>
<dbReference type="EnsemblBacteria" id="ABL69680">
    <property type="protein sequence ID" value="ABL69680"/>
    <property type="gene ID" value="Pden_1580"/>
</dbReference>
<dbReference type="GeneID" id="93449972"/>
<dbReference type="KEGG" id="pde:Pden_1317"/>
<dbReference type="KEGG" id="pde:Pden_1580"/>
<dbReference type="eggNOG" id="COG2759">
    <property type="taxonomic scope" value="Bacteria"/>
</dbReference>
<dbReference type="HOGENOM" id="CLU_003601_3_3_5"/>
<dbReference type="OrthoDB" id="9761733at2"/>
<dbReference type="UniPathway" id="UPA00193"/>
<dbReference type="Proteomes" id="UP000000361">
    <property type="component" value="Chromosome 1"/>
</dbReference>
<dbReference type="GO" id="GO:0005524">
    <property type="term" value="F:ATP binding"/>
    <property type="evidence" value="ECO:0007669"/>
    <property type="project" value="UniProtKB-UniRule"/>
</dbReference>
<dbReference type="GO" id="GO:0004329">
    <property type="term" value="F:formate-tetrahydrofolate ligase activity"/>
    <property type="evidence" value="ECO:0007669"/>
    <property type="project" value="UniProtKB-UniRule"/>
</dbReference>
<dbReference type="GO" id="GO:0035999">
    <property type="term" value="P:tetrahydrofolate interconversion"/>
    <property type="evidence" value="ECO:0007669"/>
    <property type="project" value="UniProtKB-UniRule"/>
</dbReference>
<dbReference type="CDD" id="cd00477">
    <property type="entry name" value="FTHFS"/>
    <property type="match status" value="1"/>
</dbReference>
<dbReference type="FunFam" id="3.30.1510.10:FF:000001">
    <property type="entry name" value="Formate--tetrahydrofolate ligase"/>
    <property type="match status" value="1"/>
</dbReference>
<dbReference type="FunFam" id="3.10.410.10:FF:000001">
    <property type="entry name" value="Putative formate--tetrahydrofolate ligase"/>
    <property type="match status" value="1"/>
</dbReference>
<dbReference type="Gene3D" id="3.30.1510.10">
    <property type="entry name" value="Domain 2, N(10)-formyltetrahydrofolate synthetase"/>
    <property type="match status" value="1"/>
</dbReference>
<dbReference type="Gene3D" id="3.10.410.10">
    <property type="entry name" value="Formyltetrahydrofolate synthetase, domain 3"/>
    <property type="match status" value="1"/>
</dbReference>
<dbReference type="Gene3D" id="3.40.50.300">
    <property type="entry name" value="P-loop containing nucleotide triphosphate hydrolases"/>
    <property type="match status" value="1"/>
</dbReference>
<dbReference type="HAMAP" id="MF_01543">
    <property type="entry name" value="FTHFS"/>
    <property type="match status" value="1"/>
</dbReference>
<dbReference type="InterPro" id="IPR000559">
    <property type="entry name" value="Formate_THF_ligase"/>
</dbReference>
<dbReference type="InterPro" id="IPR020628">
    <property type="entry name" value="Formate_THF_ligase_CS"/>
</dbReference>
<dbReference type="InterPro" id="IPR027417">
    <property type="entry name" value="P-loop_NTPase"/>
</dbReference>
<dbReference type="NCBIfam" id="NF010030">
    <property type="entry name" value="PRK13505.1"/>
    <property type="match status" value="1"/>
</dbReference>
<dbReference type="Pfam" id="PF01268">
    <property type="entry name" value="FTHFS"/>
    <property type="match status" value="1"/>
</dbReference>
<dbReference type="SUPFAM" id="SSF52540">
    <property type="entry name" value="P-loop containing nucleoside triphosphate hydrolases"/>
    <property type="match status" value="1"/>
</dbReference>
<dbReference type="PROSITE" id="PS00721">
    <property type="entry name" value="FTHFS_1"/>
    <property type="match status" value="1"/>
</dbReference>
<dbReference type="PROSITE" id="PS00722">
    <property type="entry name" value="FTHFS_2"/>
    <property type="match status" value="1"/>
</dbReference>
<organism>
    <name type="scientific">Paracoccus denitrificans (strain Pd 1222)</name>
    <dbReference type="NCBI Taxonomy" id="318586"/>
    <lineage>
        <taxon>Bacteria</taxon>
        <taxon>Pseudomonadati</taxon>
        <taxon>Pseudomonadota</taxon>
        <taxon>Alphaproteobacteria</taxon>
        <taxon>Rhodobacterales</taxon>
        <taxon>Paracoccaceae</taxon>
        <taxon>Paracoccus</taxon>
    </lineage>
</organism>
<evidence type="ECO:0000255" key="1">
    <source>
        <dbReference type="HAMAP-Rule" id="MF_01543"/>
    </source>
</evidence>
<proteinExistence type="inferred from homology"/>
<protein>
    <recommendedName>
        <fullName evidence="1">Formate--tetrahydrofolate ligase</fullName>
        <ecNumber evidence="1">6.3.4.3</ecNumber>
    </recommendedName>
    <alternativeName>
        <fullName evidence="1">Formyltetrahydrofolate synthetase</fullName>
        <shortName evidence="1">FHS</shortName>
        <shortName evidence="1">FTHFS</shortName>
    </alternativeName>
</protein>
<feature type="chain" id="PRO_0000293050" description="Formate--tetrahydrofolate ligase">
    <location>
        <begin position="1"/>
        <end position="555"/>
    </location>
</feature>
<feature type="binding site" evidence="1">
    <location>
        <begin position="65"/>
        <end position="72"/>
    </location>
    <ligand>
        <name>ATP</name>
        <dbReference type="ChEBI" id="CHEBI:30616"/>
    </ligand>
</feature>
<sequence>MKSDIQIAREAQKLPIAQIAGRLGLAEADFLPYGHDKAKIAHEAIAALAGRPQGRLILVTAINPTPAGEGKTTTTVGLGDALNRIGKRATVCIREASLGPNFGMKGGAAGGGHAQIVPMEDMNLHFTGDFHAVTSAHNLLAAMIDNHIHWGNALRIDPRRVTWRRVMDMNDRVLRQVVVALGGPANGVPRECGFDITVASEVMAILCLASDLADLQARLGRIVIGQTFDRRPVTAHDLGAEGAMTVLLRDALQPNLVQTLENNPALVHGGPFANIAHGCNSVMATRTALALSDYVVTEAGFGADLGAEKFLNIKCRLAGLQPAAAVLVATVRALKMNGGVARTDLGAENVAALRAGCANLGRHIQNLRRFGLPVVVAINHFSGDTEAEIAALADYCRERGVQAVLCRHWAEGGKGAEDLARAVVALAEGGADFTPLYPDEMPLAEKIETICHRIYGAGQVEFLPHIVERLEEWQAAGHGHLPVCMAKTQYSFSANPAALGAPEGFTIPVREVRLAAGAGFVVAICGDIMTMPGLPREPSALRIGVDADGHVQGLF</sequence>